<accession>Q9VL06</accession>
<accession>Q6NR00</accession>
<feature type="chain" id="PRO_0000442701" description="E3 ubiquitin-protein ligase Ufd4">
    <location>
        <begin position="1"/>
        <end position="2727"/>
    </location>
</feature>
<feature type="repeat" description="ANK 1" evidence="2">
    <location>
        <begin position="422"/>
        <end position="451"/>
    </location>
</feature>
<feature type="repeat" description="ANK 2" evidence="2">
    <location>
        <begin position="453"/>
        <end position="482"/>
    </location>
</feature>
<feature type="repeat" description="ANK 3" evidence="2">
    <location>
        <begin position="486"/>
        <end position="518"/>
    </location>
</feature>
<feature type="domain" description="MIB/HERC2" evidence="4">
    <location>
        <begin position="1322"/>
        <end position="1392"/>
    </location>
</feature>
<feature type="domain" description="HECT" evidence="3">
    <location>
        <begin position="2289"/>
        <end position="2727"/>
    </location>
</feature>
<feature type="region of interest" description="Disordered" evidence="5">
    <location>
        <begin position="247"/>
        <end position="271"/>
    </location>
</feature>
<feature type="region of interest" description="Disordered" evidence="5">
    <location>
        <begin position="365"/>
        <end position="389"/>
    </location>
</feature>
<feature type="region of interest" description="Disordered" evidence="5">
    <location>
        <begin position="682"/>
        <end position="702"/>
    </location>
</feature>
<feature type="region of interest" description="Disordered" evidence="5">
    <location>
        <begin position="1401"/>
        <end position="1448"/>
    </location>
</feature>
<feature type="region of interest" description="Disordered" evidence="5">
    <location>
        <begin position="1483"/>
        <end position="1512"/>
    </location>
</feature>
<feature type="region of interest" description="Disordered" evidence="5">
    <location>
        <begin position="1570"/>
        <end position="1592"/>
    </location>
</feature>
<feature type="region of interest" description="Disordered" evidence="5">
    <location>
        <begin position="1845"/>
        <end position="1871"/>
    </location>
</feature>
<feature type="region of interest" description="Disordered" evidence="5">
    <location>
        <begin position="1905"/>
        <end position="1930"/>
    </location>
</feature>
<feature type="region of interest" description="Disordered" evidence="5">
    <location>
        <begin position="2092"/>
        <end position="2115"/>
    </location>
</feature>
<feature type="compositionally biased region" description="Polar residues" evidence="5">
    <location>
        <begin position="365"/>
        <end position="374"/>
    </location>
</feature>
<feature type="compositionally biased region" description="Polar residues" evidence="5">
    <location>
        <begin position="1401"/>
        <end position="1430"/>
    </location>
</feature>
<feature type="compositionally biased region" description="Polar residues" evidence="5">
    <location>
        <begin position="1437"/>
        <end position="1448"/>
    </location>
</feature>
<feature type="compositionally biased region" description="Low complexity" evidence="5">
    <location>
        <begin position="1575"/>
        <end position="1592"/>
    </location>
</feature>
<feature type="compositionally biased region" description="Acidic residues" evidence="5">
    <location>
        <begin position="1909"/>
        <end position="1930"/>
    </location>
</feature>
<feature type="compositionally biased region" description="Polar residues" evidence="5">
    <location>
        <begin position="2104"/>
        <end position="2115"/>
    </location>
</feature>
<feature type="active site" description="Glycyl thioester intermediate" evidence="3">
    <location>
        <position position="2696"/>
    </location>
</feature>
<feature type="sequence conflict" description="In Ref. 3; AAQ23602." evidence="8" ref="3">
    <original>L</original>
    <variation>F</variation>
    <location>
        <position position="570"/>
    </location>
</feature>
<comment type="function">
    <text evidence="1 6">E3 ubiquitin-protein ligase which accepts ubiquitin from an E2 ubiquitin-conjugating enzyme in the form of a thioester and then directly transfers the ubiquitin to targeted substrates (By similarity). Involved in the negative regulation of the Ras/MAPK signaling pathway in the wing by acting with the E2 enzyme Unc6 and the putative E3 ligases poe and Kcmf1 to mediate the ubiquitination and proteasomal degradation of rl/MAPK (PubMed:27552662).</text>
</comment>
<comment type="catalytic activity">
    <reaction evidence="1">
        <text>S-ubiquitinyl-[E2 ubiquitin-conjugating enzyme]-L-cysteine + [acceptor protein]-L-lysine = [E2 ubiquitin-conjugating enzyme]-L-cysteine + N(6)-ubiquitinyl-[acceptor protein]-L-lysine.</text>
        <dbReference type="EC" id="2.3.2.26"/>
    </reaction>
</comment>
<comment type="pathway">
    <text evidence="1">Protein modification; protein ubiquitination.</text>
</comment>
<comment type="similarity">
    <text evidence="8">Belongs to the UPL family. K-HECT subfamily.</text>
</comment>
<organism evidence="11">
    <name type="scientific">Drosophila melanogaster</name>
    <name type="common">Fruit fly</name>
    <dbReference type="NCBI Taxonomy" id="7227"/>
    <lineage>
        <taxon>Eukaryota</taxon>
        <taxon>Metazoa</taxon>
        <taxon>Ecdysozoa</taxon>
        <taxon>Arthropoda</taxon>
        <taxon>Hexapoda</taxon>
        <taxon>Insecta</taxon>
        <taxon>Pterygota</taxon>
        <taxon>Neoptera</taxon>
        <taxon>Endopterygota</taxon>
        <taxon>Diptera</taxon>
        <taxon>Brachycera</taxon>
        <taxon>Muscomorpha</taxon>
        <taxon>Ephydroidea</taxon>
        <taxon>Drosophilidae</taxon>
        <taxon>Drosophila</taxon>
        <taxon>Sophophora</taxon>
    </lineage>
</organism>
<proteinExistence type="evidence at transcript level"/>
<protein>
    <recommendedName>
        <fullName evidence="7">E3 ubiquitin-protein ligase Ufd4</fullName>
        <ecNumber evidence="1">2.3.2.26</ecNumber>
    </recommendedName>
    <alternativeName>
        <fullName evidence="10">Ubiquitin fusion-degradation 4-like</fullName>
    </alternativeName>
</protein>
<gene>
    <name evidence="7 10" type="primary">Ufd4</name>
    <name evidence="10" type="ORF">CG5604</name>
</gene>
<sequence>MGDVDPETLLEWLSMGQGDERDMQLIALEQLCMLLLMSDNVDRCFESCPPRTFLPALCKIFLDELAPENVLEVTARAITYYLDVSAECTRRIVSIDGAIKAICNHLVVADLSSRTSRDLAEQCIKVLELICTREAGAVFEGGGLNCVLSFIRDCGSQVHKDTLHSAMSVVSRLCTKVEPNTPCIQNCVESLSTLLQHEDPMVSDGALKCFASVADRFTRKWVDPAPLAEYGLTTELLKRLQSVGGNTHSSLTAAGTQPTSSSQPAATTNSDAINENVAGTATISNSTKVKSSDAAASPQSISTTISLLSTLCRGSPSITHDILRSQLADALERALQGDERCVLDCMRFADLLLLLLFEGRQALNRGSNNPNQGQLAPRPRRNNTNTDRTHRQLIDCIRSKDSEALREAIESGGIDVNCMDDVGQTLLNWASAFGTLEMVEYLCEKGADVNKGQRSSSLHYAACFGRPAIAKILLKFGAYPDLRDEDGKTPLDKARERLDDGHREVAAILQSPGEWMSPDHSLLNKDGKKYTLMEPRGDPEMAPIYLKVLLPIFCRTFLGSMLGSVRRASLALIKKIVQYAYPTVLQSLSETSFSEDAASTSGQNGGNLLIEVIASVLDNEDDGDGHLIVLNIIEEIMCKTQEEFLDHFARLGVFAKVQALMDTDAEELYVQLPGTVEEPAAAQRSSTSVVVAPRPTSDDPMEDAKEILQGKPYHWREWSICRGRDCLYVWSDSVALELSNGSNGWFRFIIDGKLATMYSSGSPENGNDSSENRGEFLEKLMRARSCVIAGVVSQPILPTASALRLVVGNWVLQSQKTNQLQIHNTEGHQVTVLQDDLPGFIFESNRGTKHTFSAETVLGPDFASGWSTAKKKRNKSKTEGQKFQVRNLSREIYNKYFKSAQIIPRGAVAILTDIVKQIELSFEEQHMAPNGNWETTLTDALMKLSQLIHEDGVVSAYEMHSSGLVQALVAVLSVNHWETNSPRCKRNKMQKQRVSVFKKCILEDNVESATNKPRTKSTASILIQKLVSVLESTEKLPVYLYDSPCTGYSLQILQKRLRFRLERAECESTLFDRSGRTLKMEPLATIGQLSKYLLKMVAKQWYDLDRSTYFYLKKIREHRTATVFTHSFDFDEEGLLFYIGSNAKTCDWVNPAQYGLVQVTSSEGKTLPYGKLEDILSRDSISLNCHTKDNKKAWFAIDLGVYIIPTAYTLRHARGYGRSALRNWLLQGSKDGSTWTTLSTHVDDKSLVEPGSTATWPINCATDDSVWYRHIRIQQNGRNASGQTHYLSLSGFEIYGRVVGVADDIGKSVKEAEAKTRRERRQIRAQLKHMTTGARVIRGVDWRWEEQDGCAEGTITGEIHNGWIDVKWDHGVRNSYRMGAEGKYDLKLADCEYLSAFDGNQSMGSASTAAKPSEKGGNTLTSRKSSSTPSLPEATEKNQNPEGASNQTVSADNLAWKQTVETIAENVFASAKTQIISNQLAMNTSSSREARAKHKESGTNQMHKDNISGPSPLSRELEHISDLSAINNSMPAINSSNVSDLATISENLSLTELSKENICRVLTPSYKPAESVTASQSSSHPDVQSSSPRENDIKNISNIEENNKMNANNSVNKISKDLLANLRTSNIAGCPPVTQLSTEALEMIDKMRDGVDMIRNMSNSILSTDTFPVPCTNVPVGGKKTPKAQALINPDNANQKQIIVTSEEFPTKSSKKPSVTLKPAQQPNAVLSIVDIKEQPISNENVSVPSQMSISVPNLTTTSASEVPSTSEVATHTGLLETFAAIARRRTSQGTNIQDNQIMNAEANVNEHGDQNASGSFLGHSVTSLVKLALSSNFHSGLLSTAQSYPSLSSNNSENIAPSNPSNTSAGQQSASTINHTLTMSLTSTSSDSEQVSLEDFLESCRAPALLGDLDDEDDMDEDNDEEENEDEYEEVGNTLLQVMVSRNLLTFMDDEAMENRLVGVTKRKSWDDEFVLKRQFSALIPAFDPRPGRTNVNQTSDLEISPLGAELPKPQQSGGPETIEQPLLGLKLRGPGIGGIPEVEIDLSNTDWTIFRAVQELLQCSQLNKLDKFRKIWEPTYTIVYREVSPEAQESTCLESEEFPQTPDVSSKSGASTLSPNSPMHIGFNVADNNLCSVDDVLELLTQINGLNQSEIDSDVKEHGVSVLSEDLFISKKITNKLQQQIQDPLVLASNALPNWCENLNQSCPFLFPFETRQLYFNCTSFGASRSIVCLQSQRDVTVERQRIPIMSPRRDDHEFRIGRLKHERVKVPRNEDLLMWAMQVMKTHCNRKSVLEVEFLDEEGTGLGPTLEFYALVAAEIQRSDLCMWLCDDDLGEDTENSTQSAEGNSKPVGYYVNRREHGIFPAPLPQNSEICENVLKYFWFFGVFVAKVLQDMRLVDIPLSTSFLQLLCHNKVLSRNLQKVISDRRNGDLSVVSEDSDIVETCTKLLRTDSNKSNAFGGILSLENLKEIDPTRYQFLQEMQNLLLRKQSIEFDDTISAEKKHELINELKLQTQNGLEVSLEDLALTFTYLPSSSIYGYTQAELLPNGSSVNVTIDNLEAYCELLMNFILQDGIAQQMKAFSDGFNEVFPLKKLAAFTPSEARMMICGEQFPHWSREDIISYTEPKLGYNKDSPGFQRFVNVLLSMSGDERKAFLQFTTGCSSLPPGGLANLHPRLTVVRKVDAGVGSYPSVNTCVHYLKLPDYPTEEIMKERLLTATKEKGFHLN</sequence>
<dbReference type="EC" id="2.3.2.26" evidence="1"/>
<dbReference type="EMBL" id="AE014134">
    <property type="protein sequence ID" value="AAF52899.1"/>
    <property type="molecule type" value="Genomic_DNA"/>
</dbReference>
<dbReference type="EMBL" id="BT010284">
    <property type="protein sequence ID" value="AAQ23602.1"/>
    <property type="molecule type" value="mRNA"/>
</dbReference>
<dbReference type="RefSeq" id="NP_609369.1">
    <property type="nucleotide sequence ID" value="NM_135525.2"/>
</dbReference>
<dbReference type="SMR" id="Q9VL06"/>
<dbReference type="FunCoup" id="Q9VL06">
    <property type="interactions" value="2031"/>
</dbReference>
<dbReference type="IntAct" id="Q9VL06">
    <property type="interactions" value="7"/>
</dbReference>
<dbReference type="STRING" id="7227.FBpp0079663"/>
<dbReference type="GlyGen" id="Q9VL06">
    <property type="glycosylation" value="1 site"/>
</dbReference>
<dbReference type="PaxDb" id="7227-FBpp0079663"/>
<dbReference type="EnsemblMetazoa" id="FBtr0080074">
    <property type="protein sequence ID" value="FBpp0079663"/>
    <property type="gene ID" value="FBgn0032208"/>
</dbReference>
<dbReference type="GeneID" id="34378"/>
<dbReference type="KEGG" id="dme:Dmel_CG5604"/>
<dbReference type="UCSC" id="CG5604-RA">
    <property type="organism name" value="d. melanogaster"/>
</dbReference>
<dbReference type="AGR" id="FB:FBgn0032208"/>
<dbReference type="CTD" id="34378"/>
<dbReference type="FlyBase" id="FBgn0032208">
    <property type="gene designation" value="Ufd4"/>
</dbReference>
<dbReference type="VEuPathDB" id="VectorBase:FBgn0032208"/>
<dbReference type="eggNOG" id="KOG4276">
    <property type="taxonomic scope" value="Eukaryota"/>
</dbReference>
<dbReference type="GeneTree" id="ENSGT00940000156572"/>
<dbReference type="HOGENOM" id="CLU_000869_0_0_1"/>
<dbReference type="InParanoid" id="Q9VL06"/>
<dbReference type="OMA" id="INHTLTM"/>
<dbReference type="OrthoDB" id="412600at2759"/>
<dbReference type="PhylomeDB" id="Q9VL06"/>
<dbReference type="Reactome" id="R-DME-983168">
    <property type="pathway name" value="Antigen processing: Ubiquitination &amp; Proteasome degradation"/>
</dbReference>
<dbReference type="UniPathway" id="UPA00143"/>
<dbReference type="BioGRID-ORCS" id="34378">
    <property type="hits" value="0 hits in 1 CRISPR screen"/>
</dbReference>
<dbReference type="ChiTaRS" id="CG5604">
    <property type="organism name" value="fly"/>
</dbReference>
<dbReference type="GenomeRNAi" id="34378"/>
<dbReference type="PRO" id="PR:Q9VL06"/>
<dbReference type="Proteomes" id="UP000000803">
    <property type="component" value="Chromosome 2L"/>
</dbReference>
<dbReference type="Bgee" id="FBgn0032208">
    <property type="expression patterns" value="Expressed in second segment of antenna (Drosophila) and 234 other cell types or tissues"/>
</dbReference>
<dbReference type="GO" id="GO:0016607">
    <property type="term" value="C:nuclear speck"/>
    <property type="evidence" value="ECO:0000318"/>
    <property type="project" value="GO_Central"/>
</dbReference>
<dbReference type="GO" id="GO:0005634">
    <property type="term" value="C:nucleus"/>
    <property type="evidence" value="ECO:0000250"/>
    <property type="project" value="FlyBase"/>
</dbReference>
<dbReference type="GO" id="GO:0046872">
    <property type="term" value="F:metal ion binding"/>
    <property type="evidence" value="ECO:0007669"/>
    <property type="project" value="InterPro"/>
</dbReference>
<dbReference type="GO" id="GO:0061630">
    <property type="term" value="F:ubiquitin protein ligase activity"/>
    <property type="evidence" value="ECO:0000250"/>
    <property type="project" value="FlyBase"/>
</dbReference>
<dbReference type="GO" id="GO:0070373">
    <property type="term" value="P:negative regulation of ERK1 and ERK2 cascade"/>
    <property type="evidence" value="ECO:0000316"/>
    <property type="project" value="FlyBase"/>
</dbReference>
<dbReference type="GO" id="GO:0032436">
    <property type="term" value="P:positive regulation of proteasomal ubiquitin-dependent protein catabolic process"/>
    <property type="evidence" value="ECO:0000315"/>
    <property type="project" value="FlyBase"/>
</dbReference>
<dbReference type="GO" id="GO:0043161">
    <property type="term" value="P:proteasome-mediated ubiquitin-dependent protein catabolic process"/>
    <property type="evidence" value="ECO:0000318"/>
    <property type="project" value="GO_Central"/>
</dbReference>
<dbReference type="GO" id="GO:0000209">
    <property type="term" value="P:protein polyubiquitination"/>
    <property type="evidence" value="ECO:0000318"/>
    <property type="project" value="GO_Central"/>
</dbReference>
<dbReference type="GO" id="GO:0006511">
    <property type="term" value="P:ubiquitin-dependent protein catabolic process"/>
    <property type="evidence" value="ECO:0000250"/>
    <property type="project" value="FlyBase"/>
</dbReference>
<dbReference type="CDD" id="cd00078">
    <property type="entry name" value="HECTc"/>
    <property type="match status" value="1"/>
</dbReference>
<dbReference type="FunFam" id="3.90.1750.10:FF:000033">
    <property type="entry name" value="E3 ubiquitin-protein ligase hecd-1"/>
    <property type="match status" value="1"/>
</dbReference>
<dbReference type="FunFam" id="3.30.2160.10:FF:000022">
    <property type="entry name" value="E3 ubiquitin-protein ligase HECTD1"/>
    <property type="match status" value="1"/>
</dbReference>
<dbReference type="FunFam" id="1.25.10.10:FF:000051">
    <property type="entry name" value="E3 ubiquitin-protein ligase HECTD1 isoform X1"/>
    <property type="match status" value="1"/>
</dbReference>
<dbReference type="FunFam" id="2.60.120.260:FF:000014">
    <property type="entry name" value="E3 ubiquitin-protein ligase HECTD1 isoform X1"/>
    <property type="match status" value="1"/>
</dbReference>
<dbReference type="FunFam" id="3.30.2410.10:FF:000007">
    <property type="entry name" value="Putative E3 ubiquitin-protein ligase HECTD1"/>
    <property type="match status" value="1"/>
</dbReference>
<dbReference type="FunFam" id="1.25.40.20:FF:000372">
    <property type="entry name" value="Putative hect e3 ubiquitin ligase"/>
    <property type="match status" value="1"/>
</dbReference>
<dbReference type="Gene3D" id="1.25.40.20">
    <property type="entry name" value="Ankyrin repeat-containing domain"/>
    <property type="match status" value="1"/>
</dbReference>
<dbReference type="Gene3D" id="2.60.120.260">
    <property type="entry name" value="Galactose-binding domain-like"/>
    <property type="match status" value="1"/>
</dbReference>
<dbReference type="Gene3D" id="3.30.2160.10">
    <property type="entry name" value="Hect, E3 ligase catalytic domain"/>
    <property type="match status" value="1"/>
</dbReference>
<dbReference type="Gene3D" id="3.30.2410.10">
    <property type="entry name" value="Hect, E3 ligase catalytic domain"/>
    <property type="match status" value="1"/>
</dbReference>
<dbReference type="Gene3D" id="3.90.1750.10">
    <property type="entry name" value="Hect, E3 ligase catalytic domains"/>
    <property type="match status" value="2"/>
</dbReference>
<dbReference type="Gene3D" id="1.25.10.10">
    <property type="entry name" value="Leucine-rich Repeat Variant"/>
    <property type="match status" value="1"/>
</dbReference>
<dbReference type="Gene3D" id="2.30.30.40">
    <property type="entry name" value="SH3 Domains"/>
    <property type="match status" value="1"/>
</dbReference>
<dbReference type="InterPro" id="IPR002110">
    <property type="entry name" value="Ankyrin_rpt"/>
</dbReference>
<dbReference type="InterPro" id="IPR036770">
    <property type="entry name" value="Ankyrin_rpt-contain_sf"/>
</dbReference>
<dbReference type="InterPro" id="IPR011989">
    <property type="entry name" value="ARM-like"/>
</dbReference>
<dbReference type="InterPro" id="IPR016024">
    <property type="entry name" value="ARM-type_fold"/>
</dbReference>
<dbReference type="InterPro" id="IPR008979">
    <property type="entry name" value="Galactose-bd-like_sf"/>
</dbReference>
<dbReference type="InterPro" id="IPR000569">
    <property type="entry name" value="HECT_dom"/>
</dbReference>
<dbReference type="InterPro" id="IPR035983">
    <property type="entry name" value="Hect_E3_ubiquitin_ligase"/>
</dbReference>
<dbReference type="InterPro" id="IPR045322">
    <property type="entry name" value="HECTD1/TRIP12-like"/>
</dbReference>
<dbReference type="InterPro" id="IPR010606">
    <property type="entry name" value="Mib_Herc2"/>
</dbReference>
<dbReference type="InterPro" id="IPR037252">
    <property type="entry name" value="Mib_Herc2_sf"/>
</dbReference>
<dbReference type="InterPro" id="IPR012919">
    <property type="entry name" value="SUN_dom"/>
</dbReference>
<dbReference type="PANTHER" id="PTHR45670:SF1">
    <property type="entry name" value="E3 UBIQUITIN-PROTEIN LIGASE HECTD1"/>
    <property type="match status" value="1"/>
</dbReference>
<dbReference type="PANTHER" id="PTHR45670">
    <property type="entry name" value="E3 UBIQUITIN-PROTEIN LIGASE TRIP12"/>
    <property type="match status" value="1"/>
</dbReference>
<dbReference type="Pfam" id="PF12796">
    <property type="entry name" value="Ank_2"/>
    <property type="match status" value="1"/>
</dbReference>
<dbReference type="Pfam" id="PF00632">
    <property type="entry name" value="HECT"/>
    <property type="match status" value="1"/>
</dbReference>
<dbReference type="Pfam" id="PF06701">
    <property type="entry name" value="MIB_HERC2"/>
    <property type="match status" value="1"/>
</dbReference>
<dbReference type="Pfam" id="PF07738">
    <property type="entry name" value="Sad1_UNC"/>
    <property type="match status" value="1"/>
</dbReference>
<dbReference type="SMART" id="SM00248">
    <property type="entry name" value="ANK"/>
    <property type="match status" value="3"/>
</dbReference>
<dbReference type="SMART" id="SM00119">
    <property type="entry name" value="HECTc"/>
    <property type="match status" value="1"/>
</dbReference>
<dbReference type="SUPFAM" id="SSF48403">
    <property type="entry name" value="Ankyrin repeat"/>
    <property type="match status" value="1"/>
</dbReference>
<dbReference type="SUPFAM" id="SSF48371">
    <property type="entry name" value="ARM repeat"/>
    <property type="match status" value="1"/>
</dbReference>
<dbReference type="SUPFAM" id="SSF49785">
    <property type="entry name" value="Galactose-binding domain-like"/>
    <property type="match status" value="1"/>
</dbReference>
<dbReference type="SUPFAM" id="SSF56204">
    <property type="entry name" value="Hect, E3 ligase catalytic domain"/>
    <property type="match status" value="1"/>
</dbReference>
<dbReference type="SUPFAM" id="SSF159034">
    <property type="entry name" value="Mib/herc2 domain-like"/>
    <property type="match status" value="1"/>
</dbReference>
<dbReference type="PROSITE" id="PS50297">
    <property type="entry name" value="ANK_REP_REGION"/>
    <property type="match status" value="1"/>
</dbReference>
<dbReference type="PROSITE" id="PS50088">
    <property type="entry name" value="ANK_REPEAT"/>
    <property type="match status" value="2"/>
</dbReference>
<dbReference type="PROSITE" id="PS50237">
    <property type="entry name" value="HECT"/>
    <property type="match status" value="1"/>
</dbReference>
<dbReference type="PROSITE" id="PS51416">
    <property type="entry name" value="MIB_HERC2"/>
    <property type="match status" value="1"/>
</dbReference>
<keyword id="KW-0040">ANK repeat</keyword>
<keyword id="KW-1185">Reference proteome</keyword>
<keyword id="KW-0677">Repeat</keyword>
<keyword id="KW-0808">Transferase</keyword>
<keyword id="KW-0833">Ubl conjugation pathway</keyword>
<evidence type="ECO:0000250" key="1">
    <source>
        <dbReference type="UniProtKB" id="Q69ZR2"/>
    </source>
</evidence>
<evidence type="ECO:0000255" key="2"/>
<evidence type="ECO:0000255" key="3">
    <source>
        <dbReference type="PROSITE-ProRule" id="PRU00104"/>
    </source>
</evidence>
<evidence type="ECO:0000255" key="4">
    <source>
        <dbReference type="PROSITE-ProRule" id="PRU00749"/>
    </source>
</evidence>
<evidence type="ECO:0000256" key="5">
    <source>
        <dbReference type="SAM" id="MobiDB-lite"/>
    </source>
</evidence>
<evidence type="ECO:0000269" key="6">
    <source>
    </source>
</evidence>
<evidence type="ECO:0000303" key="7">
    <source>
    </source>
</evidence>
<evidence type="ECO:0000305" key="8"/>
<evidence type="ECO:0000312" key="9">
    <source>
        <dbReference type="EMBL" id="AAQ23602.1"/>
    </source>
</evidence>
<evidence type="ECO:0000312" key="10">
    <source>
        <dbReference type="FlyBase" id="FBgn0032208"/>
    </source>
</evidence>
<evidence type="ECO:0000312" key="11">
    <source>
        <dbReference type="Proteomes" id="UP000000803"/>
    </source>
</evidence>
<name>UFD4_DROME</name>
<reference evidence="11" key="1">
    <citation type="journal article" date="2000" name="Science">
        <title>The genome sequence of Drosophila melanogaster.</title>
        <authorList>
            <person name="Adams M.D."/>
            <person name="Celniker S.E."/>
            <person name="Holt R.A."/>
            <person name="Evans C.A."/>
            <person name="Gocayne J.D."/>
            <person name="Amanatides P.G."/>
            <person name="Scherer S.E."/>
            <person name="Li P.W."/>
            <person name="Hoskins R.A."/>
            <person name="Galle R.F."/>
            <person name="George R.A."/>
            <person name="Lewis S.E."/>
            <person name="Richards S."/>
            <person name="Ashburner M."/>
            <person name="Henderson S.N."/>
            <person name="Sutton G.G."/>
            <person name="Wortman J.R."/>
            <person name="Yandell M.D."/>
            <person name="Zhang Q."/>
            <person name="Chen L.X."/>
            <person name="Brandon R.C."/>
            <person name="Rogers Y.-H.C."/>
            <person name="Blazej R.G."/>
            <person name="Champe M."/>
            <person name="Pfeiffer B.D."/>
            <person name="Wan K.H."/>
            <person name="Doyle C."/>
            <person name="Baxter E.G."/>
            <person name="Helt G."/>
            <person name="Nelson C.R."/>
            <person name="Miklos G.L.G."/>
            <person name="Abril J.F."/>
            <person name="Agbayani A."/>
            <person name="An H.-J."/>
            <person name="Andrews-Pfannkoch C."/>
            <person name="Baldwin D."/>
            <person name="Ballew R.M."/>
            <person name="Basu A."/>
            <person name="Baxendale J."/>
            <person name="Bayraktaroglu L."/>
            <person name="Beasley E.M."/>
            <person name="Beeson K.Y."/>
            <person name="Benos P.V."/>
            <person name="Berman B.P."/>
            <person name="Bhandari D."/>
            <person name="Bolshakov S."/>
            <person name="Borkova D."/>
            <person name="Botchan M.R."/>
            <person name="Bouck J."/>
            <person name="Brokstein P."/>
            <person name="Brottier P."/>
            <person name="Burtis K.C."/>
            <person name="Busam D.A."/>
            <person name="Butler H."/>
            <person name="Cadieu E."/>
            <person name="Center A."/>
            <person name="Chandra I."/>
            <person name="Cherry J.M."/>
            <person name="Cawley S."/>
            <person name="Dahlke C."/>
            <person name="Davenport L.B."/>
            <person name="Davies P."/>
            <person name="de Pablos B."/>
            <person name="Delcher A."/>
            <person name="Deng Z."/>
            <person name="Mays A.D."/>
            <person name="Dew I."/>
            <person name="Dietz S.M."/>
            <person name="Dodson K."/>
            <person name="Doup L.E."/>
            <person name="Downes M."/>
            <person name="Dugan-Rocha S."/>
            <person name="Dunkov B.C."/>
            <person name="Dunn P."/>
            <person name="Durbin K.J."/>
            <person name="Evangelista C.C."/>
            <person name="Ferraz C."/>
            <person name="Ferriera S."/>
            <person name="Fleischmann W."/>
            <person name="Fosler C."/>
            <person name="Gabrielian A.E."/>
            <person name="Garg N.S."/>
            <person name="Gelbart W.M."/>
            <person name="Glasser K."/>
            <person name="Glodek A."/>
            <person name="Gong F."/>
            <person name="Gorrell J.H."/>
            <person name="Gu Z."/>
            <person name="Guan P."/>
            <person name="Harris M."/>
            <person name="Harris N.L."/>
            <person name="Harvey D.A."/>
            <person name="Heiman T.J."/>
            <person name="Hernandez J.R."/>
            <person name="Houck J."/>
            <person name="Hostin D."/>
            <person name="Houston K.A."/>
            <person name="Howland T.J."/>
            <person name="Wei M.-H."/>
            <person name="Ibegwam C."/>
            <person name="Jalali M."/>
            <person name="Kalush F."/>
            <person name="Karpen G.H."/>
            <person name="Ke Z."/>
            <person name="Kennison J.A."/>
            <person name="Ketchum K.A."/>
            <person name="Kimmel B.E."/>
            <person name="Kodira C.D."/>
            <person name="Kraft C.L."/>
            <person name="Kravitz S."/>
            <person name="Kulp D."/>
            <person name="Lai Z."/>
            <person name="Lasko P."/>
            <person name="Lei Y."/>
            <person name="Levitsky A.A."/>
            <person name="Li J.H."/>
            <person name="Li Z."/>
            <person name="Liang Y."/>
            <person name="Lin X."/>
            <person name="Liu X."/>
            <person name="Mattei B."/>
            <person name="McIntosh T.C."/>
            <person name="McLeod M.P."/>
            <person name="McPherson D."/>
            <person name="Merkulov G."/>
            <person name="Milshina N.V."/>
            <person name="Mobarry C."/>
            <person name="Morris J."/>
            <person name="Moshrefi A."/>
            <person name="Mount S.M."/>
            <person name="Moy M."/>
            <person name="Murphy B."/>
            <person name="Murphy L."/>
            <person name="Muzny D.M."/>
            <person name="Nelson D.L."/>
            <person name="Nelson D.R."/>
            <person name="Nelson K.A."/>
            <person name="Nixon K."/>
            <person name="Nusskern D.R."/>
            <person name="Pacleb J.M."/>
            <person name="Palazzolo M."/>
            <person name="Pittman G.S."/>
            <person name="Pan S."/>
            <person name="Pollard J."/>
            <person name="Puri V."/>
            <person name="Reese M.G."/>
            <person name="Reinert K."/>
            <person name="Remington K."/>
            <person name="Saunders R.D.C."/>
            <person name="Scheeler F."/>
            <person name="Shen H."/>
            <person name="Shue B.C."/>
            <person name="Siden-Kiamos I."/>
            <person name="Simpson M."/>
            <person name="Skupski M.P."/>
            <person name="Smith T.J."/>
            <person name="Spier E."/>
            <person name="Spradling A.C."/>
            <person name="Stapleton M."/>
            <person name="Strong R."/>
            <person name="Sun E."/>
            <person name="Svirskas R."/>
            <person name="Tector C."/>
            <person name="Turner R."/>
            <person name="Venter E."/>
            <person name="Wang A.H."/>
            <person name="Wang X."/>
            <person name="Wang Z.-Y."/>
            <person name="Wassarman D.A."/>
            <person name="Weinstock G.M."/>
            <person name="Weissenbach J."/>
            <person name="Williams S.M."/>
            <person name="Woodage T."/>
            <person name="Worley K.C."/>
            <person name="Wu D."/>
            <person name="Yang S."/>
            <person name="Yao Q.A."/>
            <person name="Ye J."/>
            <person name="Yeh R.-F."/>
            <person name="Zaveri J.S."/>
            <person name="Zhan M."/>
            <person name="Zhang G."/>
            <person name="Zhao Q."/>
            <person name="Zheng L."/>
            <person name="Zheng X.H."/>
            <person name="Zhong F.N."/>
            <person name="Zhong W."/>
            <person name="Zhou X."/>
            <person name="Zhu S.C."/>
            <person name="Zhu X."/>
            <person name="Smith H.O."/>
            <person name="Gibbs R.A."/>
            <person name="Myers E.W."/>
            <person name="Rubin G.M."/>
            <person name="Venter J.C."/>
        </authorList>
    </citation>
    <scope>NUCLEOTIDE SEQUENCE [LARGE SCALE GENOMIC DNA]</scope>
    <source>
        <strain evidence="11">Berkeley</strain>
    </source>
</reference>
<reference evidence="11" key="2">
    <citation type="journal article" date="2002" name="Genome Biol.">
        <title>Annotation of the Drosophila melanogaster euchromatic genome: a systematic review.</title>
        <authorList>
            <person name="Misra S."/>
            <person name="Crosby M.A."/>
            <person name="Mungall C.J."/>
            <person name="Matthews B.B."/>
            <person name="Campbell K.S."/>
            <person name="Hradecky P."/>
            <person name="Huang Y."/>
            <person name="Kaminker J.S."/>
            <person name="Millburn G.H."/>
            <person name="Prochnik S.E."/>
            <person name="Smith C.D."/>
            <person name="Tupy J.L."/>
            <person name="Whitfield E.J."/>
            <person name="Bayraktaroglu L."/>
            <person name="Berman B.P."/>
            <person name="Bettencourt B.R."/>
            <person name="Celniker S.E."/>
            <person name="de Grey A.D.N.J."/>
            <person name="Drysdale R.A."/>
            <person name="Harris N.L."/>
            <person name="Richter J."/>
            <person name="Russo S."/>
            <person name="Schroeder A.J."/>
            <person name="Shu S.Q."/>
            <person name="Stapleton M."/>
            <person name="Yamada C."/>
            <person name="Ashburner M."/>
            <person name="Gelbart W.M."/>
            <person name="Rubin G.M."/>
            <person name="Lewis S.E."/>
        </authorList>
    </citation>
    <scope>GENOME REANNOTATION</scope>
    <source>
        <strain evidence="11">Berkeley</strain>
    </source>
</reference>
<reference evidence="9" key="3">
    <citation type="submission" date="2003-08" db="EMBL/GenBank/DDBJ databases">
        <authorList>
            <person name="Stapleton M."/>
            <person name="Brokstein P."/>
            <person name="Hong L."/>
            <person name="Agbayani A."/>
            <person name="Carlson J."/>
            <person name="Champe M."/>
            <person name="Chavez C."/>
            <person name="Dorsett V."/>
            <person name="Dresnek D."/>
            <person name="Farfan D."/>
            <person name="Frise E."/>
            <person name="George R."/>
            <person name="Gonzalez M."/>
            <person name="Guarin H."/>
            <person name="Kronmiller B."/>
            <person name="Li P."/>
            <person name="Liao G."/>
            <person name="Miranda A."/>
            <person name="Mungall C.J."/>
            <person name="Nunoo J."/>
            <person name="Pacleb J."/>
            <person name="Paragas V."/>
            <person name="Park S."/>
            <person name="Patel S."/>
            <person name="Phouanenavong S."/>
            <person name="Wan K."/>
            <person name="Yu C."/>
            <person name="Lewis S.E."/>
            <person name="Rubin G.M."/>
            <person name="Celniker S."/>
        </authorList>
    </citation>
    <scope>NUCLEOTIDE SEQUENCE [LARGE SCALE MRNA]</scope>
    <source>
        <strain evidence="9">Berkeley</strain>
    </source>
</reference>
<reference evidence="8" key="4">
    <citation type="journal article" date="2016" name="PLoS Biol.">
        <title>The Deubiquitinase USP47 Stabilizes MAPK by Counteracting the Function of the N-end Rule ligase POE/UBR4 in Drosophila.</title>
        <authorList>
            <person name="Ashton-Beaucage D."/>
            <person name="Lemieux C."/>
            <person name="Udell C.M."/>
            <person name="Sahmi M."/>
            <person name="Rochette S."/>
            <person name="Therrien M."/>
        </authorList>
    </citation>
    <scope>FUNCTION</scope>
</reference>